<organism>
    <name type="scientific">Homo sapiens</name>
    <name type="common">Human</name>
    <dbReference type="NCBI Taxonomy" id="9606"/>
    <lineage>
        <taxon>Eukaryota</taxon>
        <taxon>Metazoa</taxon>
        <taxon>Chordata</taxon>
        <taxon>Craniata</taxon>
        <taxon>Vertebrata</taxon>
        <taxon>Euteleostomi</taxon>
        <taxon>Mammalia</taxon>
        <taxon>Eutheria</taxon>
        <taxon>Euarchontoglires</taxon>
        <taxon>Primates</taxon>
        <taxon>Haplorrhini</taxon>
        <taxon>Catarrhini</taxon>
        <taxon>Hominidae</taxon>
        <taxon>Homo</taxon>
    </lineage>
</organism>
<protein>
    <recommendedName>
        <fullName>Homeobox protein PKNOX2</fullName>
    </recommendedName>
    <alternativeName>
        <fullName>Homeobox protein PREP-2</fullName>
    </alternativeName>
    <alternativeName>
        <fullName>PBX/knotted homeobox 2</fullName>
    </alternativeName>
</protein>
<reference key="1">
    <citation type="journal article" date="2004" name="Nat. Genet.">
        <title>Complete sequencing and characterization of 21,243 full-length human cDNAs.</title>
        <authorList>
            <person name="Ota T."/>
            <person name="Suzuki Y."/>
            <person name="Nishikawa T."/>
            <person name="Otsuki T."/>
            <person name="Sugiyama T."/>
            <person name="Irie R."/>
            <person name="Wakamatsu A."/>
            <person name="Hayashi K."/>
            <person name="Sato H."/>
            <person name="Nagai K."/>
            <person name="Kimura K."/>
            <person name="Makita H."/>
            <person name="Sekine M."/>
            <person name="Obayashi M."/>
            <person name="Nishi T."/>
            <person name="Shibahara T."/>
            <person name="Tanaka T."/>
            <person name="Ishii S."/>
            <person name="Yamamoto J."/>
            <person name="Saito K."/>
            <person name="Kawai Y."/>
            <person name="Isono Y."/>
            <person name="Nakamura Y."/>
            <person name="Nagahari K."/>
            <person name="Murakami K."/>
            <person name="Yasuda T."/>
            <person name="Iwayanagi T."/>
            <person name="Wagatsuma M."/>
            <person name="Shiratori A."/>
            <person name="Sudo H."/>
            <person name="Hosoiri T."/>
            <person name="Kaku Y."/>
            <person name="Kodaira H."/>
            <person name="Kondo H."/>
            <person name="Sugawara M."/>
            <person name="Takahashi M."/>
            <person name="Kanda K."/>
            <person name="Yokoi T."/>
            <person name="Furuya T."/>
            <person name="Kikkawa E."/>
            <person name="Omura Y."/>
            <person name="Abe K."/>
            <person name="Kamihara K."/>
            <person name="Katsuta N."/>
            <person name="Sato K."/>
            <person name="Tanikawa M."/>
            <person name="Yamazaki M."/>
            <person name="Ninomiya K."/>
            <person name="Ishibashi T."/>
            <person name="Yamashita H."/>
            <person name="Murakawa K."/>
            <person name="Fujimori K."/>
            <person name="Tanai H."/>
            <person name="Kimata M."/>
            <person name="Watanabe M."/>
            <person name="Hiraoka S."/>
            <person name="Chiba Y."/>
            <person name="Ishida S."/>
            <person name="Ono Y."/>
            <person name="Takiguchi S."/>
            <person name="Watanabe S."/>
            <person name="Yosida M."/>
            <person name="Hotuta T."/>
            <person name="Kusano J."/>
            <person name="Kanehori K."/>
            <person name="Takahashi-Fujii A."/>
            <person name="Hara H."/>
            <person name="Tanase T.-O."/>
            <person name="Nomura Y."/>
            <person name="Togiya S."/>
            <person name="Komai F."/>
            <person name="Hara R."/>
            <person name="Takeuchi K."/>
            <person name="Arita M."/>
            <person name="Imose N."/>
            <person name="Musashino K."/>
            <person name="Yuuki H."/>
            <person name="Oshima A."/>
            <person name="Sasaki N."/>
            <person name="Aotsuka S."/>
            <person name="Yoshikawa Y."/>
            <person name="Matsunawa H."/>
            <person name="Ichihara T."/>
            <person name="Shiohata N."/>
            <person name="Sano S."/>
            <person name="Moriya S."/>
            <person name="Momiyama H."/>
            <person name="Satoh N."/>
            <person name="Takami S."/>
            <person name="Terashima Y."/>
            <person name="Suzuki O."/>
            <person name="Nakagawa S."/>
            <person name="Senoh A."/>
            <person name="Mizoguchi H."/>
            <person name="Goto Y."/>
            <person name="Shimizu F."/>
            <person name="Wakebe H."/>
            <person name="Hishigaki H."/>
            <person name="Watanabe T."/>
            <person name="Sugiyama A."/>
            <person name="Takemoto M."/>
            <person name="Kawakami B."/>
            <person name="Yamazaki M."/>
            <person name="Watanabe K."/>
            <person name="Kumagai A."/>
            <person name="Itakura S."/>
            <person name="Fukuzumi Y."/>
            <person name="Fujimori Y."/>
            <person name="Komiyama M."/>
            <person name="Tashiro H."/>
            <person name="Tanigami A."/>
            <person name="Fujiwara T."/>
            <person name="Ono T."/>
            <person name="Yamada K."/>
            <person name="Fujii Y."/>
            <person name="Ozaki K."/>
            <person name="Hirao M."/>
            <person name="Ohmori Y."/>
            <person name="Kawabata A."/>
            <person name="Hikiji T."/>
            <person name="Kobatake N."/>
            <person name="Inagaki H."/>
            <person name="Ikema Y."/>
            <person name="Okamoto S."/>
            <person name="Okitani R."/>
            <person name="Kawakami T."/>
            <person name="Noguchi S."/>
            <person name="Itoh T."/>
            <person name="Shigeta K."/>
            <person name="Senba T."/>
            <person name="Matsumura K."/>
            <person name="Nakajima Y."/>
            <person name="Mizuno T."/>
            <person name="Morinaga M."/>
            <person name="Sasaki M."/>
            <person name="Togashi T."/>
            <person name="Oyama M."/>
            <person name="Hata H."/>
            <person name="Watanabe M."/>
            <person name="Komatsu T."/>
            <person name="Mizushima-Sugano J."/>
            <person name="Satoh T."/>
            <person name="Shirai Y."/>
            <person name="Takahashi Y."/>
            <person name="Nakagawa K."/>
            <person name="Okumura K."/>
            <person name="Nagase T."/>
            <person name="Nomura N."/>
            <person name="Kikuchi H."/>
            <person name="Masuho Y."/>
            <person name="Yamashita R."/>
            <person name="Nakai K."/>
            <person name="Yada T."/>
            <person name="Nakamura Y."/>
            <person name="Ohara O."/>
            <person name="Isogai T."/>
            <person name="Sugano S."/>
        </authorList>
    </citation>
    <scope>NUCLEOTIDE SEQUENCE [LARGE SCALE MRNA] (ISOFORM 2)</scope>
</reference>
<reference key="2">
    <citation type="journal article" date="2007" name="BMC Genomics">
        <title>The full-ORF clone resource of the German cDNA consortium.</title>
        <authorList>
            <person name="Bechtel S."/>
            <person name="Rosenfelder H."/>
            <person name="Duda A."/>
            <person name="Schmidt C.P."/>
            <person name="Ernst U."/>
            <person name="Wellenreuther R."/>
            <person name="Mehrle A."/>
            <person name="Schuster C."/>
            <person name="Bahr A."/>
            <person name="Bloecker H."/>
            <person name="Heubner D."/>
            <person name="Hoerlein A."/>
            <person name="Michel G."/>
            <person name="Wedler H."/>
            <person name="Koehrer K."/>
            <person name="Ottenwaelder B."/>
            <person name="Poustka A."/>
            <person name="Wiemann S."/>
            <person name="Schupp I."/>
        </authorList>
    </citation>
    <scope>NUCLEOTIDE SEQUENCE [LARGE SCALE MRNA] (ISOFORM 1)</scope>
    <source>
        <tissue>Small intestine</tissue>
    </source>
</reference>
<reference key="3">
    <citation type="journal article" date="2006" name="Nature">
        <title>Human chromosome 11 DNA sequence and analysis including novel gene identification.</title>
        <authorList>
            <person name="Taylor T.D."/>
            <person name="Noguchi H."/>
            <person name="Totoki Y."/>
            <person name="Toyoda A."/>
            <person name="Kuroki Y."/>
            <person name="Dewar K."/>
            <person name="Lloyd C."/>
            <person name="Itoh T."/>
            <person name="Takeda T."/>
            <person name="Kim D.-W."/>
            <person name="She X."/>
            <person name="Barlow K.F."/>
            <person name="Bloom T."/>
            <person name="Bruford E."/>
            <person name="Chang J.L."/>
            <person name="Cuomo C.A."/>
            <person name="Eichler E."/>
            <person name="FitzGerald M.G."/>
            <person name="Jaffe D.B."/>
            <person name="LaButti K."/>
            <person name="Nicol R."/>
            <person name="Park H.-S."/>
            <person name="Seaman C."/>
            <person name="Sougnez C."/>
            <person name="Yang X."/>
            <person name="Zimmer A.R."/>
            <person name="Zody M.C."/>
            <person name="Birren B.W."/>
            <person name="Nusbaum C."/>
            <person name="Fujiyama A."/>
            <person name="Hattori M."/>
            <person name="Rogers J."/>
            <person name="Lander E.S."/>
            <person name="Sakaki Y."/>
        </authorList>
    </citation>
    <scope>NUCLEOTIDE SEQUENCE [LARGE SCALE GENOMIC DNA]</scope>
</reference>
<reference key="4">
    <citation type="journal article" date="2004" name="Genome Res.">
        <title>The status, quality, and expansion of the NIH full-length cDNA project: the Mammalian Gene Collection (MGC).</title>
        <authorList>
            <consortium name="The MGC Project Team"/>
        </authorList>
    </citation>
    <scope>NUCLEOTIDE SEQUENCE [LARGE SCALE MRNA] (ISOFORM 1)</scope>
    <scope>VARIANT GLU-447 DEL</scope>
    <source>
        <tissue>Brain</tissue>
    </source>
</reference>
<reference key="5">
    <citation type="journal article" date="2001" name="Biochem. Biophys. Res. Commun.">
        <title>Identification and characterization of human PKNOX2, a novel homeobox-containing gene.</title>
        <authorList>
            <person name="Imoto I."/>
            <person name="Sonoda I."/>
            <person name="Yuki Y."/>
            <person name="Inazawa J."/>
        </authorList>
    </citation>
    <scope>NUCLEOTIDE SEQUENCE [MRNA] OF 4-472 (ISOFORM 1)</scope>
    <scope>SUBCELLULAR LOCATION</scope>
</reference>
<reference key="6">
    <citation type="journal article" date="2002" name="Nucleic Acids Res.">
        <title>Characterization of PREP2, a paralog of PREP1, which defines a novel sub-family of the MEINOX TALE homeodomain transcription factors.</title>
        <authorList>
            <person name="Fognani C."/>
            <person name="Kilstrup-Nielsen C."/>
            <person name="Berthelsen J."/>
            <person name="Ferretti E."/>
            <person name="Zappavigna V."/>
            <person name="Blasi F."/>
        </authorList>
    </citation>
    <scope>NUCLEOTIDE SEQUENCE [MRNA] OF 13-472 (ISOFORM 1)</scope>
</reference>
<evidence type="ECO:0000255" key="1"/>
<evidence type="ECO:0000255" key="2">
    <source>
        <dbReference type="PROSITE-ProRule" id="PRU00108"/>
    </source>
</evidence>
<evidence type="ECO:0000256" key="3">
    <source>
        <dbReference type="SAM" id="MobiDB-lite"/>
    </source>
</evidence>
<evidence type="ECO:0000269" key="4">
    <source>
    </source>
</evidence>
<evidence type="ECO:0000269" key="5">
    <source>
    </source>
</evidence>
<evidence type="ECO:0000303" key="6">
    <source>
    </source>
</evidence>
<evidence type="ECO:0000305" key="7"/>
<name>PKNX2_HUMAN</name>
<dbReference type="EMBL" id="AK298999">
    <property type="protein sequence ID" value="BAH12921.1"/>
    <property type="molecule type" value="mRNA"/>
</dbReference>
<dbReference type="EMBL" id="BX648615">
    <property type="protein sequence ID" value="CAH56146.1"/>
    <property type="molecule type" value="mRNA"/>
</dbReference>
<dbReference type="EMBL" id="AP000708">
    <property type="status" value="NOT_ANNOTATED_CDS"/>
    <property type="molecule type" value="Genomic_DNA"/>
</dbReference>
<dbReference type="EMBL" id="AP001007">
    <property type="status" value="NOT_ANNOTATED_CDS"/>
    <property type="molecule type" value="Genomic_DNA"/>
</dbReference>
<dbReference type="EMBL" id="AP003061">
    <property type="status" value="NOT_ANNOTATED_CDS"/>
    <property type="molecule type" value="Genomic_DNA"/>
</dbReference>
<dbReference type="EMBL" id="AP003069">
    <property type="status" value="NOT_ANNOTATED_CDS"/>
    <property type="molecule type" value="Genomic_DNA"/>
</dbReference>
<dbReference type="EMBL" id="BC045626">
    <property type="protein sequence ID" value="AAH45626.3"/>
    <property type="molecule type" value="mRNA"/>
</dbReference>
<dbReference type="EMBL" id="AB065001">
    <property type="protein sequence ID" value="BAB83665.1"/>
    <property type="status" value="ALT_INIT"/>
    <property type="molecule type" value="mRNA"/>
</dbReference>
<dbReference type="EMBL" id="AJ417081">
    <property type="protein sequence ID" value="CAD01142.1"/>
    <property type="molecule type" value="mRNA"/>
</dbReference>
<dbReference type="CCDS" id="CCDS41730.1">
    <molecule id="Q96KN3-1"/>
</dbReference>
<dbReference type="PIR" id="JC7766">
    <property type="entry name" value="JC7766"/>
</dbReference>
<dbReference type="RefSeq" id="NP_001369252.1">
    <molecule id="Q96KN3-1"/>
    <property type="nucleotide sequence ID" value="NM_001382323.2"/>
</dbReference>
<dbReference type="RefSeq" id="NP_001369253.1">
    <molecule id="Q96KN3-1"/>
    <property type="nucleotide sequence ID" value="NM_001382324.1"/>
</dbReference>
<dbReference type="RefSeq" id="NP_001369254.1">
    <molecule id="Q96KN3-1"/>
    <property type="nucleotide sequence ID" value="NM_001382325.1"/>
</dbReference>
<dbReference type="RefSeq" id="NP_001369255.1">
    <molecule id="Q96KN3-1"/>
    <property type="nucleotide sequence ID" value="NM_001382326.1"/>
</dbReference>
<dbReference type="RefSeq" id="NP_001369256.1">
    <molecule id="Q96KN3-1"/>
    <property type="nucleotide sequence ID" value="NM_001382327.1"/>
</dbReference>
<dbReference type="RefSeq" id="NP_001369257.1">
    <molecule id="Q96KN3-1"/>
    <property type="nucleotide sequence ID" value="NM_001382328.1"/>
</dbReference>
<dbReference type="RefSeq" id="NP_001369269.1">
    <molecule id="Q96KN3-2"/>
    <property type="nucleotide sequence ID" value="NM_001382340.1"/>
</dbReference>
<dbReference type="RefSeq" id="NP_071345.2">
    <property type="nucleotide sequence ID" value="NM_022062.2"/>
</dbReference>
<dbReference type="RefSeq" id="XP_005271699.1">
    <property type="nucleotide sequence ID" value="XM_005271642.2"/>
</dbReference>
<dbReference type="RefSeq" id="XP_011541246.1">
    <property type="nucleotide sequence ID" value="XM_011542944.2"/>
</dbReference>
<dbReference type="RefSeq" id="XP_011541247.1">
    <property type="nucleotide sequence ID" value="XM_011542945.2"/>
</dbReference>
<dbReference type="RefSeq" id="XP_016873599.1">
    <property type="nucleotide sequence ID" value="XM_017018110.1"/>
</dbReference>
<dbReference type="SMR" id="Q96KN3"/>
<dbReference type="BioGRID" id="121969">
    <property type="interactions" value="45"/>
</dbReference>
<dbReference type="FunCoup" id="Q96KN3">
    <property type="interactions" value="315"/>
</dbReference>
<dbReference type="IntAct" id="Q96KN3">
    <property type="interactions" value="45"/>
</dbReference>
<dbReference type="STRING" id="9606.ENSP00000298282"/>
<dbReference type="GlyGen" id="Q96KN3">
    <property type="glycosylation" value="1 site, 1 O-linked glycan (1 site)"/>
</dbReference>
<dbReference type="iPTMnet" id="Q96KN3"/>
<dbReference type="PhosphoSitePlus" id="Q96KN3"/>
<dbReference type="BioMuta" id="PKNOX2"/>
<dbReference type="DMDM" id="115311621"/>
<dbReference type="jPOST" id="Q96KN3"/>
<dbReference type="MassIVE" id="Q96KN3"/>
<dbReference type="PaxDb" id="9606-ENSP00000298282"/>
<dbReference type="PeptideAtlas" id="Q96KN3"/>
<dbReference type="ProteomicsDB" id="24907"/>
<dbReference type="ProteomicsDB" id="77086">
    <molecule id="Q96KN3-1"/>
</dbReference>
<dbReference type="Pumba" id="Q96KN3"/>
<dbReference type="Antibodypedia" id="9279">
    <property type="antibodies" value="198 antibodies from 28 providers"/>
</dbReference>
<dbReference type="DNASU" id="63876"/>
<dbReference type="Ensembl" id="ENST00000298282.14">
    <molecule id="Q96KN3-1"/>
    <property type="protein sequence ID" value="ENSP00000298282.8"/>
    <property type="gene ID" value="ENSG00000165495.16"/>
</dbReference>
<dbReference type="GeneID" id="63876"/>
<dbReference type="MANE-Select" id="ENST00000298282.14">
    <property type="protein sequence ID" value="ENSP00000298282.8"/>
    <property type="RefSeq nucleotide sequence ID" value="NM_001382323.2"/>
    <property type="RefSeq protein sequence ID" value="NP_001369252.1"/>
</dbReference>
<dbReference type="UCSC" id="uc001qbu.4">
    <molecule id="Q96KN3-1"/>
    <property type="organism name" value="human"/>
</dbReference>
<dbReference type="AGR" id="HGNC:16714"/>
<dbReference type="DisGeNET" id="63876"/>
<dbReference type="GeneCards" id="PKNOX2"/>
<dbReference type="HGNC" id="HGNC:16714">
    <property type="gene designation" value="PKNOX2"/>
</dbReference>
<dbReference type="HPA" id="ENSG00000165495">
    <property type="expression patterns" value="Tissue enhanced (tongue)"/>
</dbReference>
<dbReference type="MIM" id="613066">
    <property type="type" value="gene"/>
</dbReference>
<dbReference type="neXtProt" id="NX_Q96KN3"/>
<dbReference type="OpenTargets" id="ENSG00000165495"/>
<dbReference type="PharmGKB" id="PA33355"/>
<dbReference type="VEuPathDB" id="HostDB:ENSG00000165495"/>
<dbReference type="eggNOG" id="KOG0773">
    <property type="taxonomic scope" value="Eukaryota"/>
</dbReference>
<dbReference type="GeneTree" id="ENSGT00940000158793"/>
<dbReference type="HOGENOM" id="CLU_023139_0_2_1"/>
<dbReference type="InParanoid" id="Q96KN3"/>
<dbReference type="OMA" id="WERFINA"/>
<dbReference type="OrthoDB" id="10056939at2759"/>
<dbReference type="PAN-GO" id="Q96KN3">
    <property type="GO annotations" value="3 GO annotations based on evolutionary models"/>
</dbReference>
<dbReference type="PhylomeDB" id="Q96KN3"/>
<dbReference type="TreeFam" id="TF318093"/>
<dbReference type="PathwayCommons" id="Q96KN3"/>
<dbReference type="SignaLink" id="Q96KN3"/>
<dbReference type="BioGRID-ORCS" id="63876">
    <property type="hits" value="5 hits in 1166 CRISPR screens"/>
</dbReference>
<dbReference type="ChiTaRS" id="PKNOX2">
    <property type="organism name" value="human"/>
</dbReference>
<dbReference type="GenomeRNAi" id="63876"/>
<dbReference type="Pharos" id="Q96KN3">
    <property type="development level" value="Tbio"/>
</dbReference>
<dbReference type="PRO" id="PR:Q96KN3"/>
<dbReference type="Proteomes" id="UP000005640">
    <property type="component" value="Chromosome 11"/>
</dbReference>
<dbReference type="RNAct" id="Q96KN3">
    <property type="molecule type" value="protein"/>
</dbReference>
<dbReference type="Bgee" id="ENSG00000165495">
    <property type="expression patterns" value="Expressed in pigmented layer of retina and 169 other cell types or tissues"/>
</dbReference>
<dbReference type="ExpressionAtlas" id="Q96KN3">
    <property type="expression patterns" value="baseline and differential"/>
</dbReference>
<dbReference type="GO" id="GO:0015629">
    <property type="term" value="C:actin cytoskeleton"/>
    <property type="evidence" value="ECO:0007669"/>
    <property type="project" value="Ensembl"/>
</dbReference>
<dbReference type="GO" id="GO:0005737">
    <property type="term" value="C:cytoplasm"/>
    <property type="evidence" value="ECO:0007669"/>
    <property type="project" value="Ensembl"/>
</dbReference>
<dbReference type="GO" id="GO:0045171">
    <property type="term" value="C:intercellular bridge"/>
    <property type="evidence" value="ECO:0000314"/>
    <property type="project" value="HPA"/>
</dbReference>
<dbReference type="GO" id="GO:0015630">
    <property type="term" value="C:microtubule cytoskeleton"/>
    <property type="evidence" value="ECO:0007669"/>
    <property type="project" value="Ensembl"/>
</dbReference>
<dbReference type="GO" id="GO:0005654">
    <property type="term" value="C:nucleoplasm"/>
    <property type="evidence" value="ECO:0000314"/>
    <property type="project" value="HPA"/>
</dbReference>
<dbReference type="GO" id="GO:0051015">
    <property type="term" value="F:actin filament binding"/>
    <property type="evidence" value="ECO:0007669"/>
    <property type="project" value="Ensembl"/>
</dbReference>
<dbReference type="GO" id="GO:0003785">
    <property type="term" value="F:actin monomer binding"/>
    <property type="evidence" value="ECO:0007669"/>
    <property type="project" value="Ensembl"/>
</dbReference>
<dbReference type="GO" id="GO:0000977">
    <property type="term" value="F:RNA polymerase II transcription regulatory region sequence-specific DNA binding"/>
    <property type="evidence" value="ECO:0007669"/>
    <property type="project" value="Ensembl"/>
</dbReference>
<dbReference type="GO" id="GO:1990837">
    <property type="term" value="F:sequence-specific double-stranded DNA binding"/>
    <property type="evidence" value="ECO:0000314"/>
    <property type="project" value="ARUK-UCL"/>
</dbReference>
<dbReference type="GO" id="GO:0006357">
    <property type="term" value="P:regulation of transcription by RNA polymerase II"/>
    <property type="evidence" value="ECO:0007669"/>
    <property type="project" value="Ensembl"/>
</dbReference>
<dbReference type="CDD" id="cd00086">
    <property type="entry name" value="homeodomain"/>
    <property type="match status" value="1"/>
</dbReference>
<dbReference type="FunFam" id="1.10.10.60:FF:000004">
    <property type="entry name" value="Meis2 homeobox isoform 2c"/>
    <property type="match status" value="1"/>
</dbReference>
<dbReference type="Gene3D" id="1.10.10.60">
    <property type="entry name" value="Homeodomain-like"/>
    <property type="match status" value="1"/>
</dbReference>
<dbReference type="InterPro" id="IPR001356">
    <property type="entry name" value="HD"/>
</dbReference>
<dbReference type="InterPro" id="IPR009057">
    <property type="entry name" value="Homeodomain-like_sf"/>
</dbReference>
<dbReference type="InterPro" id="IPR008422">
    <property type="entry name" value="KN_HD"/>
</dbReference>
<dbReference type="InterPro" id="IPR032453">
    <property type="entry name" value="PKNOX/Meis_N"/>
</dbReference>
<dbReference type="InterPro" id="IPR050224">
    <property type="entry name" value="TALE_homeobox"/>
</dbReference>
<dbReference type="PANTHER" id="PTHR11850">
    <property type="entry name" value="HOMEOBOX PROTEIN TRANSCRIPTION FACTORS"/>
    <property type="match status" value="1"/>
</dbReference>
<dbReference type="Pfam" id="PF05920">
    <property type="entry name" value="Homeobox_KN"/>
    <property type="match status" value="1"/>
</dbReference>
<dbReference type="Pfam" id="PF16493">
    <property type="entry name" value="Meis_PKNOX_N"/>
    <property type="match status" value="1"/>
</dbReference>
<dbReference type="SMART" id="SM00389">
    <property type="entry name" value="HOX"/>
    <property type="match status" value="1"/>
</dbReference>
<dbReference type="SUPFAM" id="SSF46689">
    <property type="entry name" value="Homeodomain-like"/>
    <property type="match status" value="1"/>
</dbReference>
<dbReference type="PROSITE" id="PS50071">
    <property type="entry name" value="HOMEOBOX_2"/>
    <property type="match status" value="1"/>
</dbReference>
<gene>
    <name type="primary">PKNOX2</name>
    <name type="synonym">PREP2</name>
</gene>
<feature type="chain" id="PRO_0000049250" description="Homeobox protein PKNOX2">
    <location>
        <begin position="1"/>
        <end position="472"/>
    </location>
</feature>
<feature type="domain" description="MEIS N-terminal" evidence="1">
    <location>
        <begin position="96"/>
        <end position="179"/>
    </location>
</feature>
<feature type="DNA-binding region" description="Homeobox" evidence="2">
    <location>
        <begin position="291"/>
        <end position="350"/>
    </location>
</feature>
<feature type="region of interest" description="Disordered" evidence="3">
    <location>
        <begin position="1"/>
        <end position="62"/>
    </location>
</feature>
<feature type="region of interest" description="Disordered" evidence="3">
    <location>
        <begin position="351"/>
        <end position="371"/>
    </location>
</feature>
<feature type="region of interest" description="Disordered" evidence="3">
    <location>
        <begin position="386"/>
        <end position="405"/>
    </location>
</feature>
<feature type="region of interest" description="Disordered" evidence="3">
    <location>
        <begin position="422"/>
        <end position="472"/>
    </location>
</feature>
<feature type="compositionally biased region" description="Polar residues" evidence="3">
    <location>
        <begin position="26"/>
        <end position="38"/>
    </location>
</feature>
<feature type="compositionally biased region" description="Low complexity" evidence="3">
    <location>
        <begin position="46"/>
        <end position="56"/>
    </location>
</feature>
<feature type="compositionally biased region" description="Basic residues" evidence="3">
    <location>
        <begin position="361"/>
        <end position="371"/>
    </location>
</feature>
<feature type="compositionally biased region" description="Acidic residues" evidence="3">
    <location>
        <begin position="429"/>
        <end position="454"/>
    </location>
</feature>
<feature type="splice variant" id="VSP_054306" description="In isoform 2." evidence="6">
    <original>MMQHASPAPALTMMATQNVPPPPYQDSPQMTATAQPPSKAQAVHISAPSAAASTPVPSAPIDPQAQLEADKRAVY</original>
    <variation>MSRPHPTRTAH</variation>
    <location>
        <begin position="1"/>
        <end position="75"/>
    </location>
</feature>
<feature type="sequence variant" id="VAR_049590" description="In dbSNP:rs34936365.">
    <original>E</original>
    <variation>K</variation>
    <location>
        <position position="110"/>
    </location>
</feature>
<feature type="sequence variant" id="VAR_027500" description="In dbSNP:rs3832749." evidence="5">
    <location>
        <position position="447"/>
    </location>
</feature>
<feature type="sequence conflict" description="In Ref. 1; BAH12921." evidence="7" ref="1">
    <original>D</original>
    <variation>G</variation>
    <location>
        <position position="427"/>
    </location>
</feature>
<comment type="interaction">
    <interactant intactId="EBI-2692890">
        <id>Q96KN3</id>
    </interactant>
    <interactant intactId="EBI-638194">
        <id>P53365</id>
        <label>ARFIP2</label>
    </interactant>
    <organismsDiffer>false</organismsDiffer>
    <experiments>5</experiments>
</comment>
<comment type="interaction">
    <interactant intactId="EBI-2692890">
        <id>Q96KN3</id>
    </interactant>
    <interactant intactId="EBI-747505">
        <id>Q8TAB5</id>
        <label>C1orf216</label>
    </interactant>
    <organismsDiffer>false</organismsDiffer>
    <experiments>5</experiments>
</comment>
<comment type="interaction">
    <interactant intactId="EBI-2692890">
        <id>Q96KN3</id>
    </interactant>
    <interactant intactId="EBI-744311">
        <id>Q8IYX3</id>
        <label>CCDC116</label>
    </interactant>
    <organismsDiffer>false</organismsDiffer>
    <experiments>3</experiments>
</comment>
<comment type="interaction">
    <interactant intactId="EBI-2692890">
        <id>Q96KN3</id>
    </interactant>
    <interactant intactId="EBI-740814">
        <id>Q8N715</id>
        <label>CCDC185</label>
    </interactant>
    <organismsDiffer>false</organismsDiffer>
    <experiments>3</experiments>
</comment>
<comment type="interaction">
    <interactant intactId="EBI-2692890">
        <id>Q96KN3</id>
    </interactant>
    <interactant intactId="EBI-10181422">
        <id>A0A1B0GWI1</id>
        <label>CCDC196</label>
    </interactant>
    <organismsDiffer>false</organismsDiffer>
    <experiments>3</experiments>
</comment>
<comment type="interaction">
    <interactant intactId="EBI-2692890">
        <id>Q96KN3</id>
    </interactant>
    <interactant intactId="EBI-10250303">
        <id>Q6IPU0</id>
        <label>CENPP</label>
    </interactant>
    <organismsDiffer>false</organismsDiffer>
    <experiments>3</experiments>
</comment>
<comment type="interaction">
    <interactant intactId="EBI-2692890">
        <id>Q96KN3</id>
    </interactant>
    <interactant intactId="EBI-2872455">
        <id>O60519</id>
        <label>CREBL2</label>
    </interactant>
    <organismsDiffer>false</organismsDiffer>
    <experiments>3</experiments>
</comment>
<comment type="interaction">
    <interactant intactId="EBI-2692890">
        <id>Q96KN3</id>
    </interactant>
    <interactant intactId="EBI-747012">
        <id>Q9H0L4</id>
        <label>CSTF2T</label>
    </interactant>
    <organismsDiffer>false</organismsDiffer>
    <experiments>5</experiments>
</comment>
<comment type="interaction">
    <interactant intactId="EBI-2692890">
        <id>Q96KN3</id>
    </interactant>
    <interactant intactId="EBI-1774260">
        <id>Q8WZ74</id>
        <label>CTTNBP2</label>
    </interactant>
    <organismsDiffer>false</organismsDiffer>
    <experiments>3</experiments>
</comment>
<comment type="interaction">
    <interactant intactId="EBI-2692890">
        <id>Q96KN3</id>
    </interactant>
    <interactant intactId="EBI-1774273">
        <id>Q9P2B4</id>
        <label>CTTNBP2NL</label>
    </interactant>
    <organismsDiffer>false</organismsDiffer>
    <experiments>3</experiments>
</comment>
<comment type="interaction">
    <interactant intactId="EBI-2692890">
        <id>Q96KN3</id>
    </interactant>
    <interactant intactId="EBI-2510241">
        <id>Q9BW61</id>
        <label>DDA1</label>
    </interactant>
    <organismsDiffer>false</organismsDiffer>
    <experiments>5</experiments>
</comment>
<comment type="interaction">
    <interactant intactId="EBI-2692890">
        <id>Q96KN3</id>
    </interactant>
    <interactant intactId="EBI-744099">
        <id>Q9H0I2</id>
        <label>ENKD1</label>
    </interactant>
    <organismsDiffer>false</organismsDiffer>
    <experiments>3</experiments>
</comment>
<comment type="interaction">
    <interactant intactId="EBI-2692890">
        <id>Q96KN3</id>
    </interactant>
    <interactant intactId="EBI-2558383">
        <id>Q8TC76</id>
        <label>FAM110B</label>
    </interactant>
    <organismsDiffer>false</organismsDiffer>
    <experiments>5</experiments>
</comment>
<comment type="interaction">
    <interactant intactId="EBI-2692890">
        <id>Q96KN3</id>
    </interactant>
    <interactant intactId="EBI-701903">
        <id>Q14192</id>
        <label>FHL2</label>
    </interactant>
    <organismsDiffer>false</organismsDiffer>
    <experiments>3</experiments>
</comment>
<comment type="interaction">
    <interactant intactId="EBI-2692890">
        <id>Q96KN3</id>
    </interactant>
    <interactant intactId="EBI-740220">
        <id>O14964</id>
        <label>HGS</label>
    </interactant>
    <organismsDiffer>false</organismsDiffer>
    <experiments>3</experiments>
</comment>
<comment type="interaction">
    <interactant intactId="EBI-2692890">
        <id>Q96KN3</id>
    </interactant>
    <interactant intactId="EBI-297509">
        <id>P46940</id>
        <label>IQGAP1</label>
    </interactant>
    <organismsDiffer>false</organismsDiffer>
    <experiments>3</experiments>
</comment>
<comment type="interaction">
    <interactant intactId="EBI-2692890">
        <id>Q96KN3</id>
    </interactant>
    <interactant intactId="EBI-11978579">
        <id>O95983-2</id>
        <label>MBD3</label>
    </interactant>
    <organismsDiffer>false</organismsDiffer>
    <experiments>5</experiments>
</comment>
<comment type="interaction">
    <interactant intactId="EBI-2692890">
        <id>Q96KN3</id>
    </interactant>
    <interactant intactId="EBI-348259">
        <id>Q96EZ8</id>
        <label>MCRS1</label>
    </interactant>
    <organismsDiffer>false</organismsDiffer>
    <experiments>3</experiments>
</comment>
<comment type="interaction">
    <interactant intactId="EBI-2692890">
        <id>Q96KN3</id>
    </interactant>
    <interactant intactId="EBI-7950783">
        <id>Q96JP2</id>
        <label>MYO15B</label>
    </interactant>
    <organismsDiffer>false</organismsDiffer>
    <experiments>3</experiments>
</comment>
<comment type="interaction">
    <interactant intactId="EBI-2692890">
        <id>Q96KN3</id>
    </interactant>
    <interactant intactId="EBI-746484">
        <id>P48552</id>
        <label>NRIP1</label>
    </interactant>
    <organismsDiffer>false</organismsDiffer>
    <experiments>3</experiments>
</comment>
<comment type="interaction">
    <interactant intactId="EBI-2692890">
        <id>Q96KN3</id>
    </interactant>
    <interactant intactId="EBI-741048">
        <id>Q7Z3B4</id>
        <label>NUP54</label>
    </interactant>
    <organismsDiffer>false</organismsDiffer>
    <experiments>3</experiments>
</comment>
<comment type="interaction">
    <interactant intactId="EBI-2692890">
        <id>Q96KN3</id>
    </interactant>
    <interactant intactId="EBI-2811583">
        <id>Q9BVL2</id>
        <label>NUP58</label>
    </interactant>
    <organismsDiffer>false</organismsDiffer>
    <experiments>3</experiments>
</comment>
<comment type="interaction">
    <interactant intactId="EBI-2692890">
        <id>Q96KN3</id>
    </interactant>
    <interactant intactId="EBI-714785">
        <id>Q9H8K7</id>
        <label>PAAT</label>
    </interactant>
    <organismsDiffer>false</organismsDiffer>
    <experiments>3</experiments>
</comment>
<comment type="interaction">
    <interactant intactId="EBI-2692890">
        <id>Q96KN3</id>
    </interactant>
    <interactant intactId="EBI-301611">
        <id>P40424</id>
        <label>PBX1</label>
    </interactant>
    <organismsDiffer>false</organismsDiffer>
    <experiments>3</experiments>
</comment>
<comment type="interaction">
    <interactant intactId="EBI-2692890">
        <id>Q96KN3</id>
    </interactant>
    <interactant intactId="EBI-10302990">
        <id>Q9BYU1</id>
        <label>PBX4</label>
    </interactant>
    <organismsDiffer>false</organismsDiffer>
    <experiments>4</experiments>
</comment>
<comment type="interaction">
    <interactant intactId="EBI-2692890">
        <id>Q96KN3</id>
    </interactant>
    <interactant intactId="EBI-79165">
        <id>Q9NRD5</id>
        <label>PICK1</label>
    </interactant>
    <organismsDiffer>false</organismsDiffer>
    <experiments>3</experiments>
</comment>
<comment type="interaction">
    <interactant intactId="EBI-2692890">
        <id>Q96KN3</id>
    </interactant>
    <interactant intactId="EBI-358489">
        <id>Q96GM5</id>
        <label>SMARCD1</label>
    </interactant>
    <organismsDiffer>false</organismsDiffer>
    <experiments>3</experiments>
</comment>
<comment type="interaction">
    <interactant intactId="EBI-2692890">
        <id>Q96KN3</id>
    </interactant>
    <interactant intactId="EBI-749295">
        <id>O75716</id>
        <label>STK16</label>
    </interactant>
    <organismsDiffer>false</organismsDiffer>
    <experiments>3</experiments>
</comment>
<comment type="interaction">
    <interactant intactId="EBI-2692890">
        <id>Q96KN3</id>
    </interactant>
    <interactant intactId="EBI-492476">
        <id>Q96RU7</id>
        <label>TRIB3</label>
    </interactant>
    <organismsDiffer>false</organismsDiffer>
    <experiments>3</experiments>
</comment>
<comment type="interaction">
    <interactant intactId="EBI-2692890">
        <id>Q96KN3</id>
    </interactant>
    <interactant intactId="EBI-346882">
        <id>Q99816</id>
        <label>TSG101</label>
    </interactant>
    <organismsDiffer>false</organismsDiffer>
    <experiments>3</experiments>
</comment>
<comment type="interaction">
    <interactant intactId="EBI-2692890">
        <id>Q96KN3</id>
    </interactant>
    <interactant intactId="EBI-739895">
        <id>Q8N6Y0</id>
        <label>USHBP1</label>
    </interactant>
    <organismsDiffer>false</organismsDiffer>
    <experiments>3</experiments>
</comment>
<comment type="interaction">
    <interactant intactId="EBI-2692890">
        <id>Q96KN3</id>
    </interactant>
    <interactant intactId="EBI-2559305">
        <id>A5D8V6</id>
        <label>VPS37C</label>
    </interactant>
    <organismsDiffer>false</organismsDiffer>
    <experiments>5</experiments>
</comment>
<comment type="subcellular location">
    <subcellularLocation>
        <location evidence="2 4">Nucleus</location>
    </subcellularLocation>
</comment>
<comment type="alternative products">
    <event type="alternative splicing"/>
    <isoform>
        <id>Q96KN3-1</id>
        <name>1</name>
        <sequence type="displayed"/>
    </isoform>
    <isoform>
        <id>Q96KN3-2</id>
        <name>2</name>
        <sequence type="described" ref="VSP_054306"/>
    </isoform>
</comment>
<comment type="similarity">
    <text evidence="7">Belongs to the TALE/MEIS homeobox family.</text>
</comment>
<comment type="sequence caution" evidence="7">
    <conflict type="erroneous initiation">
        <sequence resource="EMBL-CDS" id="BAB83665"/>
    </conflict>
</comment>
<proteinExistence type="evidence at protein level"/>
<keyword id="KW-0025">Alternative splicing</keyword>
<keyword id="KW-0238">DNA-binding</keyword>
<keyword id="KW-0371">Homeobox</keyword>
<keyword id="KW-0539">Nucleus</keyword>
<keyword id="KW-1267">Proteomics identification</keyword>
<keyword id="KW-1185">Reference proteome</keyword>
<accession>Q96KN3</accession>
<accession>B7Z5I5</accession>
<accession>F5GZ15</accession>
<accession>Q63HL6</accession>
<accession>Q86XD1</accession>
<sequence length="472" mass="52028">MMQHASPAPALTMMATQNVPPPPYQDSPQMTATAQPPSKAQAVHISAPSAAASTPVPSAPIDPQAQLEADKRAVYRHPLFPLLTLLFEKCEQATQGSECITSASFDVDIENFVHQQEQEHKPFFSDDPELDNLMVKAIQVLRIHLLELEKVNELCKDFCNRYITCLKTKMHSDNLLRNDLGGPYSPNQPSINLHSQDLLQNSPNSMSGVSNNPQGIVVPASALQQGNIAMTTVNSQVVSGGALYQPVTMVTSQGQVVTQAIPQGAIQIQNTQVNLDLTSLLDNEDKKSKNKRGVLPKHATNIMRSWLFQHLMHPYPTEDEKRQIAAQTNLTLLQVNNWFINARRRILQPMLDASNPDPAPKAKKIKSQHRPTQRFWPNSIAAGVLQQQGGAPGTNPDGSINLDNLQSLSSDSATMAMQQAMMAAHDDSLDGTEEEDEDEMEEEEEEELEEEVDELQTTNVSDLGLEHSDSLE</sequence>